<keyword id="KW-0025">Alternative splicing</keyword>
<keyword id="KW-0489">Methyltransferase</keyword>
<keyword id="KW-1185">Reference proteome</keyword>
<keyword id="KW-0949">S-adenosyl-L-methionine</keyword>
<keyword id="KW-0808">Transferase</keyword>
<protein>
    <recommendedName>
        <fullName evidence="2">SET domain-containing protein SmydA-8, isoform A</fullName>
        <ecNumber evidence="1">2.1.1.-</ecNumber>
    </recommendedName>
</protein>
<evidence type="ECO:0000255" key="1">
    <source>
        <dbReference type="PROSITE-ProRule" id="PRU00190"/>
    </source>
</evidence>
<evidence type="ECO:0000305" key="2"/>
<evidence type="ECO:0000312" key="3">
    <source>
        <dbReference type="EMBL" id="AAN09072.1"/>
    </source>
</evidence>
<evidence type="ECO:0000312" key="4">
    <source>
        <dbReference type="FlyBase" id="FBgn0053548"/>
    </source>
</evidence>
<comment type="alternative products">
    <event type="alternative splicing"/>
    <isoform>
        <id>O46040-1</id>
        <name>A</name>
        <sequence type="displayed"/>
    </isoform>
    <isoform>
        <id>P83501-1</id>
        <name>B</name>
        <sequence type="external"/>
    </isoform>
</comment>
<comment type="similarity">
    <text evidence="1">Belongs to the class V-like SAM-binding methyltransferase superfamily.</text>
</comment>
<comment type="sequence caution" evidence="2">
    <conflict type="erroneous gene model prediction">
        <sequence resource="EMBL-CDS" id="CAA15694"/>
    </conflict>
</comment>
<dbReference type="EC" id="2.1.1.-" evidence="1"/>
<dbReference type="EMBL" id="AJ238707">
    <property type="protein sequence ID" value="CAB42051.1"/>
    <property type="molecule type" value="mRNA"/>
</dbReference>
<dbReference type="EMBL" id="AE014298">
    <property type="protein sequence ID" value="AAN09072.1"/>
    <property type="molecule type" value="Genomic_DNA"/>
</dbReference>
<dbReference type="EMBL" id="AL009193">
    <property type="protein sequence ID" value="CAA15694.2"/>
    <property type="status" value="ALT_SEQ"/>
    <property type="molecule type" value="Genomic_DNA"/>
</dbReference>
<dbReference type="RefSeq" id="NP_001014717.1">
    <molecule id="O46040-1"/>
    <property type="nucleotide sequence ID" value="NM_001014717.2"/>
</dbReference>
<dbReference type="RefSeq" id="NP_001284812.1">
    <molecule id="O46040-1"/>
    <property type="nucleotide sequence ID" value="NM_001297883.1"/>
</dbReference>
<dbReference type="SMR" id="O46040"/>
<dbReference type="BioGRID" id="57739">
    <property type="interactions" value="17"/>
</dbReference>
<dbReference type="FunCoup" id="O46040">
    <property type="interactions" value="1"/>
</dbReference>
<dbReference type="IntAct" id="O46040">
    <property type="interactions" value="19"/>
</dbReference>
<dbReference type="STRING" id="7227.FBpp0311668"/>
<dbReference type="PaxDb" id="7227-FBpp0070406"/>
<dbReference type="DNASU" id="31200"/>
<dbReference type="EnsemblMetazoa" id="FBtr0070422">
    <molecule id="O46040-1"/>
    <property type="protein sequence ID" value="FBpp0070406"/>
    <property type="gene ID" value="FBgn0053548"/>
</dbReference>
<dbReference type="EnsemblMetazoa" id="FBtr0345599">
    <molecule id="O46040-1"/>
    <property type="protein sequence ID" value="FBpp0311668"/>
    <property type="gene ID" value="FBgn0053548"/>
</dbReference>
<dbReference type="GeneID" id="31200"/>
<dbReference type="KEGG" id="dme:Dmel_CG33548"/>
<dbReference type="UCSC" id="CG33548-RA">
    <molecule id="O46040-1"/>
    <property type="organism name" value="d. melanogaster"/>
</dbReference>
<dbReference type="AGR" id="FB:FBgn0053548"/>
<dbReference type="CTD" id="31200"/>
<dbReference type="FlyBase" id="FBgn0053548">
    <property type="gene designation" value="SmydA-8"/>
</dbReference>
<dbReference type="VEuPathDB" id="VectorBase:FBgn0053548"/>
<dbReference type="eggNOG" id="KOG2084">
    <property type="taxonomic scope" value="Eukaryota"/>
</dbReference>
<dbReference type="HOGENOM" id="CLU_024539_2_0_1"/>
<dbReference type="InParanoid" id="O46040"/>
<dbReference type="OMA" id="ECAHFQR"/>
<dbReference type="OrthoDB" id="5945798at2759"/>
<dbReference type="PhylomeDB" id="O46040"/>
<dbReference type="SignaLink" id="O46040"/>
<dbReference type="BioGRID-ORCS" id="31200">
    <property type="hits" value="0 hits in 1 CRISPR screen"/>
</dbReference>
<dbReference type="GenomeRNAi" id="31200"/>
<dbReference type="Proteomes" id="UP000000803">
    <property type="component" value="Chromosome X"/>
</dbReference>
<dbReference type="Bgee" id="FBgn0053548">
    <property type="expression patterns" value="Expressed in adult oenocyte (Drosophila) in adult thorax and 74 other cell types or tissues"/>
</dbReference>
<dbReference type="ExpressionAtlas" id="O46040">
    <property type="expression patterns" value="baseline and differential"/>
</dbReference>
<dbReference type="GO" id="GO:0000785">
    <property type="term" value="C:chromatin"/>
    <property type="evidence" value="ECO:0000250"/>
    <property type="project" value="FlyBase"/>
</dbReference>
<dbReference type="GO" id="GO:0005634">
    <property type="term" value="C:nucleus"/>
    <property type="evidence" value="ECO:0000318"/>
    <property type="project" value="GO_Central"/>
</dbReference>
<dbReference type="GO" id="GO:0042826">
    <property type="term" value="F:histone deacetylase binding"/>
    <property type="evidence" value="ECO:0000250"/>
    <property type="project" value="FlyBase"/>
</dbReference>
<dbReference type="GO" id="GO:0016279">
    <property type="term" value="F:protein-lysine N-methyltransferase activity"/>
    <property type="evidence" value="ECO:0000303"/>
    <property type="project" value="FlyBase"/>
</dbReference>
<dbReference type="GO" id="GO:0008757">
    <property type="term" value="F:S-adenosylmethionine-dependent methyltransferase activity"/>
    <property type="evidence" value="ECO:0000250"/>
    <property type="project" value="FlyBase"/>
</dbReference>
<dbReference type="GO" id="GO:0032259">
    <property type="term" value="P:methylation"/>
    <property type="evidence" value="ECO:0007669"/>
    <property type="project" value="UniProtKB-KW"/>
</dbReference>
<dbReference type="GO" id="GO:0010629">
    <property type="term" value="P:negative regulation of gene expression"/>
    <property type="evidence" value="ECO:0000250"/>
    <property type="project" value="FlyBase"/>
</dbReference>
<dbReference type="CDD" id="cd20071">
    <property type="entry name" value="SET_SMYD"/>
    <property type="match status" value="1"/>
</dbReference>
<dbReference type="FunFam" id="2.170.270.10:FF:000013">
    <property type="entry name" value="Histone-lysine N-methyltransferase SMYD1 isoform 1"/>
    <property type="match status" value="1"/>
</dbReference>
<dbReference type="Gene3D" id="1.10.220.160">
    <property type="match status" value="1"/>
</dbReference>
<dbReference type="Gene3D" id="6.10.140.2220">
    <property type="match status" value="1"/>
</dbReference>
<dbReference type="Gene3D" id="2.170.270.10">
    <property type="entry name" value="SET domain"/>
    <property type="match status" value="1"/>
</dbReference>
<dbReference type="InterPro" id="IPR001214">
    <property type="entry name" value="SET_dom"/>
</dbReference>
<dbReference type="InterPro" id="IPR046341">
    <property type="entry name" value="SET_dom_sf"/>
</dbReference>
<dbReference type="InterPro" id="IPR053010">
    <property type="entry name" value="SET_SmydA-8"/>
</dbReference>
<dbReference type="PANTHER" id="PTHR46455">
    <property type="entry name" value="SET AND MYND DOMAIN CONTAINING, ARTHROPOD-SPECIFIC, MEMBER 4, ISOFORM A"/>
    <property type="match status" value="1"/>
</dbReference>
<dbReference type="PANTHER" id="PTHR46455:SF3">
    <property type="entry name" value="SET AND MYND DOMAIN CONTAINING, ARTHROPOD-SPECIFIC, MEMBER 9, ISOFORM A-RELATED"/>
    <property type="match status" value="1"/>
</dbReference>
<dbReference type="Pfam" id="PF00856">
    <property type="entry name" value="SET"/>
    <property type="match status" value="1"/>
</dbReference>
<dbReference type="SMART" id="SM00317">
    <property type="entry name" value="SET"/>
    <property type="match status" value="1"/>
</dbReference>
<dbReference type="SUPFAM" id="SSF82199">
    <property type="entry name" value="SET domain"/>
    <property type="match status" value="1"/>
</dbReference>
<dbReference type="PROSITE" id="PS50280">
    <property type="entry name" value="SET"/>
    <property type="match status" value="1"/>
</dbReference>
<accession>O46040</accession>
<accession>O46041</accession>
<accession>Q9UB82</accession>
<organism evidence="3">
    <name type="scientific">Drosophila melanogaster</name>
    <name type="common">Fruit fly</name>
    <dbReference type="NCBI Taxonomy" id="7227"/>
    <lineage>
        <taxon>Eukaryota</taxon>
        <taxon>Metazoa</taxon>
        <taxon>Ecdysozoa</taxon>
        <taxon>Arthropoda</taxon>
        <taxon>Hexapoda</taxon>
        <taxon>Insecta</taxon>
        <taxon>Pterygota</taxon>
        <taxon>Neoptera</taxon>
        <taxon>Endopterygota</taxon>
        <taxon>Diptera</taxon>
        <taxon>Brachycera</taxon>
        <taxon>Muscomorpha</taxon>
        <taxon>Ephydroidea</taxon>
        <taxon>Drosophilidae</taxon>
        <taxon>Drosophila</taxon>
        <taxon>Sophophora</taxon>
    </lineage>
</organism>
<name>MSTAA_DROME</name>
<proteinExistence type="evidence at transcript level"/>
<sequence length="462" mass="52157">MSTAAQCPPPRPGGGGGDTTLAALSAHMAPCRDTTPEQLAQLIDVHLGDLRQEQPNWTISSSTVAGRGVFATRDIAAGELIFQERALVTGPTARKGQLSSCICCHETLPQTGFLCRHRCTLPVCETCSDSEEHQAECEHFRRWQPKDVDAEQEQVNPMSLRILTAVRVFHLGKEQRHLVDAMQANAERAYRREIIQAAQCFRNFPTTDRVFMDQLFRIVGVLNTNAFEAPCRSGGHETLLRGLFPLTAIMNHECTPNASHYFENGRLAVVRAARDIPKGGEITTTYTKILWGNLTRNIFLKMTKHFACDCVRCHDNTENGTYLSALFCREQGCRGLVIPVQTRTLQPDWRCITCENVFPHAKMAKYQDFALNTINNRINSCSVQDMIHFINELCPRFCPSSNYVLIEAKLNVIWRMTRFDHEEYTPEEMGHMDRYREEVLAILHKLGAGECTLKKLITGEIQ</sequence>
<reference evidence="2" key="1">
    <citation type="journal article" date="2000" name="Mol. Biol. (Mosk.)">
        <title>Local duplication of genes with insertion of a complex microsatellite.</title>
        <authorList>
            <person name="Alatortsev V.E."/>
            <person name="Kovalenko T.A."/>
            <person name="Kalmykova A.I."/>
        </authorList>
    </citation>
    <scope>NUCLEOTIDE SEQUENCE [MRNA]</scope>
    <source>
        <tissue>Head</tissue>
    </source>
</reference>
<reference evidence="2" key="2">
    <citation type="journal article" date="2000" name="Science">
        <title>The genome sequence of Drosophila melanogaster.</title>
        <authorList>
            <person name="Adams M.D."/>
            <person name="Celniker S.E."/>
            <person name="Holt R.A."/>
            <person name="Evans C.A."/>
            <person name="Gocayne J.D."/>
            <person name="Amanatides P.G."/>
            <person name="Scherer S.E."/>
            <person name="Li P.W."/>
            <person name="Hoskins R.A."/>
            <person name="Galle R.F."/>
            <person name="George R.A."/>
            <person name="Lewis S.E."/>
            <person name="Richards S."/>
            <person name="Ashburner M."/>
            <person name="Henderson S.N."/>
            <person name="Sutton G.G."/>
            <person name="Wortman J.R."/>
            <person name="Yandell M.D."/>
            <person name="Zhang Q."/>
            <person name="Chen L.X."/>
            <person name="Brandon R.C."/>
            <person name="Rogers Y.-H.C."/>
            <person name="Blazej R.G."/>
            <person name="Champe M."/>
            <person name="Pfeiffer B.D."/>
            <person name="Wan K.H."/>
            <person name="Doyle C."/>
            <person name="Baxter E.G."/>
            <person name="Helt G."/>
            <person name="Nelson C.R."/>
            <person name="Miklos G.L.G."/>
            <person name="Abril J.F."/>
            <person name="Agbayani A."/>
            <person name="An H.-J."/>
            <person name="Andrews-Pfannkoch C."/>
            <person name="Baldwin D."/>
            <person name="Ballew R.M."/>
            <person name="Basu A."/>
            <person name="Baxendale J."/>
            <person name="Bayraktaroglu L."/>
            <person name="Beasley E.M."/>
            <person name="Beeson K.Y."/>
            <person name="Benos P.V."/>
            <person name="Berman B.P."/>
            <person name="Bhandari D."/>
            <person name="Bolshakov S."/>
            <person name="Borkova D."/>
            <person name="Botchan M.R."/>
            <person name="Bouck J."/>
            <person name="Brokstein P."/>
            <person name="Brottier P."/>
            <person name="Burtis K.C."/>
            <person name="Busam D.A."/>
            <person name="Butler H."/>
            <person name="Cadieu E."/>
            <person name="Center A."/>
            <person name="Chandra I."/>
            <person name="Cherry J.M."/>
            <person name="Cawley S."/>
            <person name="Dahlke C."/>
            <person name="Davenport L.B."/>
            <person name="Davies P."/>
            <person name="de Pablos B."/>
            <person name="Delcher A."/>
            <person name="Deng Z."/>
            <person name="Mays A.D."/>
            <person name="Dew I."/>
            <person name="Dietz S.M."/>
            <person name="Dodson K."/>
            <person name="Doup L.E."/>
            <person name="Downes M."/>
            <person name="Dugan-Rocha S."/>
            <person name="Dunkov B.C."/>
            <person name="Dunn P."/>
            <person name="Durbin K.J."/>
            <person name="Evangelista C.C."/>
            <person name="Ferraz C."/>
            <person name="Ferriera S."/>
            <person name="Fleischmann W."/>
            <person name="Fosler C."/>
            <person name="Gabrielian A.E."/>
            <person name="Garg N.S."/>
            <person name="Gelbart W.M."/>
            <person name="Glasser K."/>
            <person name="Glodek A."/>
            <person name="Gong F."/>
            <person name="Gorrell J.H."/>
            <person name="Gu Z."/>
            <person name="Guan P."/>
            <person name="Harris M."/>
            <person name="Harris N.L."/>
            <person name="Harvey D.A."/>
            <person name="Heiman T.J."/>
            <person name="Hernandez J.R."/>
            <person name="Houck J."/>
            <person name="Hostin D."/>
            <person name="Houston K.A."/>
            <person name="Howland T.J."/>
            <person name="Wei M.-H."/>
            <person name="Ibegwam C."/>
            <person name="Jalali M."/>
            <person name="Kalush F."/>
            <person name="Karpen G.H."/>
            <person name="Ke Z."/>
            <person name="Kennison J.A."/>
            <person name="Ketchum K.A."/>
            <person name="Kimmel B.E."/>
            <person name="Kodira C.D."/>
            <person name="Kraft C.L."/>
            <person name="Kravitz S."/>
            <person name="Kulp D."/>
            <person name="Lai Z."/>
            <person name="Lasko P."/>
            <person name="Lei Y."/>
            <person name="Levitsky A.A."/>
            <person name="Li J.H."/>
            <person name="Li Z."/>
            <person name="Liang Y."/>
            <person name="Lin X."/>
            <person name="Liu X."/>
            <person name="Mattei B."/>
            <person name="McIntosh T.C."/>
            <person name="McLeod M.P."/>
            <person name="McPherson D."/>
            <person name="Merkulov G."/>
            <person name="Milshina N.V."/>
            <person name="Mobarry C."/>
            <person name="Morris J."/>
            <person name="Moshrefi A."/>
            <person name="Mount S.M."/>
            <person name="Moy M."/>
            <person name="Murphy B."/>
            <person name="Murphy L."/>
            <person name="Muzny D.M."/>
            <person name="Nelson D.L."/>
            <person name="Nelson D.R."/>
            <person name="Nelson K.A."/>
            <person name="Nixon K."/>
            <person name="Nusskern D.R."/>
            <person name="Pacleb J.M."/>
            <person name="Palazzolo M."/>
            <person name="Pittman G.S."/>
            <person name="Pan S."/>
            <person name="Pollard J."/>
            <person name="Puri V."/>
            <person name="Reese M.G."/>
            <person name="Reinert K."/>
            <person name="Remington K."/>
            <person name="Saunders R.D.C."/>
            <person name="Scheeler F."/>
            <person name="Shen H."/>
            <person name="Shue B.C."/>
            <person name="Siden-Kiamos I."/>
            <person name="Simpson M."/>
            <person name="Skupski M.P."/>
            <person name="Smith T.J."/>
            <person name="Spier E."/>
            <person name="Spradling A.C."/>
            <person name="Stapleton M."/>
            <person name="Strong R."/>
            <person name="Sun E."/>
            <person name="Svirskas R."/>
            <person name="Tector C."/>
            <person name="Turner R."/>
            <person name="Venter E."/>
            <person name="Wang A.H."/>
            <person name="Wang X."/>
            <person name="Wang Z.-Y."/>
            <person name="Wassarman D.A."/>
            <person name="Weinstock G.M."/>
            <person name="Weissenbach J."/>
            <person name="Williams S.M."/>
            <person name="Woodage T."/>
            <person name="Worley K.C."/>
            <person name="Wu D."/>
            <person name="Yang S."/>
            <person name="Yao Q.A."/>
            <person name="Ye J."/>
            <person name="Yeh R.-F."/>
            <person name="Zaveri J.S."/>
            <person name="Zhan M."/>
            <person name="Zhang G."/>
            <person name="Zhao Q."/>
            <person name="Zheng L."/>
            <person name="Zheng X.H."/>
            <person name="Zhong F.N."/>
            <person name="Zhong W."/>
            <person name="Zhou X."/>
            <person name="Zhu S.C."/>
            <person name="Zhu X."/>
            <person name="Smith H.O."/>
            <person name="Gibbs R.A."/>
            <person name="Myers E.W."/>
            <person name="Rubin G.M."/>
            <person name="Venter J.C."/>
        </authorList>
    </citation>
    <scope>NUCLEOTIDE SEQUENCE [LARGE SCALE GENOMIC DNA]</scope>
    <source>
        <strain>Berkeley</strain>
    </source>
</reference>
<reference key="3">
    <citation type="journal article" date="2002" name="Genome Biol.">
        <title>Annotation of the Drosophila melanogaster euchromatic genome: a systematic review.</title>
        <authorList>
            <person name="Misra S."/>
            <person name="Crosby M.A."/>
            <person name="Mungall C.J."/>
            <person name="Matthews B.B."/>
            <person name="Campbell K.S."/>
            <person name="Hradecky P."/>
            <person name="Huang Y."/>
            <person name="Kaminker J.S."/>
            <person name="Millburn G.H."/>
            <person name="Prochnik S.E."/>
            <person name="Smith C.D."/>
            <person name="Tupy J.L."/>
            <person name="Whitfield E.J."/>
            <person name="Bayraktaroglu L."/>
            <person name="Berman B.P."/>
            <person name="Bettencourt B.R."/>
            <person name="Celniker S.E."/>
            <person name="de Grey A.D.N.J."/>
            <person name="Drysdale R.A."/>
            <person name="Harris N.L."/>
            <person name="Richter J."/>
            <person name="Russo S."/>
            <person name="Schroeder A.J."/>
            <person name="Shu S.Q."/>
            <person name="Stapleton M."/>
            <person name="Yamada C."/>
            <person name="Ashburner M."/>
            <person name="Gelbart W.M."/>
            <person name="Rubin G.M."/>
            <person name="Lewis S.E."/>
        </authorList>
    </citation>
    <scope>GENOME REANNOTATION</scope>
    <scope>ALTERNATIVE SPLICING</scope>
    <source>
        <strain>Berkeley</strain>
    </source>
</reference>
<reference evidence="2" key="4">
    <citation type="journal article" date="2000" name="Science">
        <title>From sequence to chromosome: the tip of the X chromosome of D. melanogaster.</title>
        <authorList>
            <person name="Benos P.V."/>
            <person name="Gatt M.K."/>
            <person name="Ashburner M."/>
            <person name="Murphy L."/>
            <person name="Harris D."/>
            <person name="Barrell B.G."/>
            <person name="Ferraz C."/>
            <person name="Vidal S."/>
            <person name="Brun C."/>
            <person name="Demailles J."/>
            <person name="Cadieu E."/>
            <person name="Dreano S."/>
            <person name="Gloux S."/>
            <person name="Lelaure V."/>
            <person name="Mottier S."/>
            <person name="Galibert F."/>
            <person name="Borkova D."/>
            <person name="Minana B."/>
            <person name="Kafatos F.C."/>
            <person name="Louis C."/>
            <person name="Siden-Kiamos I."/>
            <person name="Bolshakov S."/>
            <person name="Papagiannakis G."/>
            <person name="Spanos L."/>
            <person name="Cox S."/>
            <person name="Madueno E."/>
            <person name="de Pablos B."/>
            <person name="Modolell J."/>
            <person name="Peter A."/>
            <person name="Schoettler P."/>
            <person name="Werner M."/>
            <person name="Mourkioti F."/>
            <person name="Beinert N."/>
            <person name="Dowe G."/>
            <person name="Schaefer U."/>
            <person name="Jaeckle H."/>
            <person name="Bucheton A."/>
            <person name="Callister D.M."/>
            <person name="Campbell L.A."/>
            <person name="Darlamitsou A."/>
            <person name="Henderson N.S."/>
            <person name="McMillan P.J."/>
            <person name="Salles C."/>
            <person name="Tait E.A."/>
            <person name="Valenti P."/>
            <person name="Saunders R.D.C."/>
            <person name="Glover D.M."/>
        </authorList>
    </citation>
    <scope>NUCLEOTIDE SEQUENCE [LARGE SCALE GENOMIC DNA]</scope>
    <source>
        <strain>Oregon-R</strain>
    </source>
</reference>
<feature type="chain" id="PRO_0000096607" description="SET domain-containing protein SmydA-8, isoform A">
    <location>
        <begin position="1"/>
        <end position="462"/>
    </location>
</feature>
<feature type="domain" description="SET" evidence="1">
    <location>
        <begin position="55"/>
        <end position="287"/>
    </location>
</feature>
<feature type="sequence conflict" description="In Ref. 1; CAB42051." evidence="2" ref="1">
    <original>A</original>
    <variation>S</variation>
    <location>
        <position position="76"/>
    </location>
</feature>
<gene>
    <name evidence="4" type="primary">SmydA-8</name>
    <name evidence="4" type="synonym">Msta</name>
    <name evidence="4" type="ORF">CG33548</name>
</gene>